<name>NU4LM_LOBCR</name>
<dbReference type="EC" id="7.1.1.2"/>
<dbReference type="EMBL" id="AY377222">
    <property type="protein sequence ID" value="AAQ93761.1"/>
    <property type="molecule type" value="Genomic_DNA"/>
</dbReference>
<dbReference type="EMBL" id="AY377223">
    <property type="protein sequence ID" value="AAQ93762.1"/>
    <property type="molecule type" value="Genomic_DNA"/>
</dbReference>
<dbReference type="EMBL" id="AM181024">
    <property type="protein sequence ID" value="CAJ56983.1"/>
    <property type="molecule type" value="Genomic_DNA"/>
</dbReference>
<dbReference type="RefSeq" id="YP_778794.1">
    <property type="nucleotide sequence ID" value="NC_008423.1"/>
</dbReference>
<dbReference type="SMR" id="Q679C1"/>
<dbReference type="GeneID" id="4356416"/>
<dbReference type="CTD" id="4539"/>
<dbReference type="GO" id="GO:0005743">
    <property type="term" value="C:mitochondrial inner membrane"/>
    <property type="evidence" value="ECO:0000250"/>
    <property type="project" value="UniProtKB"/>
</dbReference>
<dbReference type="GO" id="GO:0045271">
    <property type="term" value="C:respiratory chain complex I"/>
    <property type="evidence" value="ECO:0000250"/>
    <property type="project" value="UniProtKB"/>
</dbReference>
<dbReference type="GO" id="GO:0008137">
    <property type="term" value="F:NADH dehydrogenase (ubiquinone) activity"/>
    <property type="evidence" value="ECO:0000250"/>
    <property type="project" value="UniProtKB"/>
</dbReference>
<dbReference type="GO" id="GO:0042773">
    <property type="term" value="P:ATP synthesis coupled electron transport"/>
    <property type="evidence" value="ECO:0007669"/>
    <property type="project" value="InterPro"/>
</dbReference>
<dbReference type="FunFam" id="1.10.287.3510:FF:000002">
    <property type="entry name" value="NADH-ubiquinone oxidoreductase chain 4L"/>
    <property type="match status" value="1"/>
</dbReference>
<dbReference type="Gene3D" id="1.10.287.3510">
    <property type="match status" value="1"/>
</dbReference>
<dbReference type="InterPro" id="IPR001133">
    <property type="entry name" value="NADH_UbQ_OxRdtase_chain4L/K"/>
</dbReference>
<dbReference type="InterPro" id="IPR039428">
    <property type="entry name" value="NUOK/Mnh_C1-like"/>
</dbReference>
<dbReference type="PANTHER" id="PTHR11434:SF0">
    <property type="entry name" value="NADH-UBIQUINONE OXIDOREDUCTASE CHAIN 4L"/>
    <property type="match status" value="1"/>
</dbReference>
<dbReference type="PANTHER" id="PTHR11434">
    <property type="entry name" value="NADH-UBIQUINONE OXIDOREDUCTASE SUBUNIT ND4L"/>
    <property type="match status" value="1"/>
</dbReference>
<dbReference type="Pfam" id="PF00420">
    <property type="entry name" value="Oxidored_q2"/>
    <property type="match status" value="1"/>
</dbReference>
<feature type="chain" id="PRO_0000275044" description="NADH-ubiquinone oxidoreductase chain 4L">
    <location>
        <begin position="1"/>
        <end position="98"/>
    </location>
</feature>
<feature type="transmembrane region" description="Helical" evidence="3">
    <location>
        <begin position="1"/>
        <end position="21"/>
    </location>
</feature>
<feature type="transmembrane region" description="Helical" evidence="3">
    <location>
        <begin position="29"/>
        <end position="49"/>
    </location>
</feature>
<feature type="transmembrane region" description="Helical" evidence="3">
    <location>
        <begin position="61"/>
        <end position="81"/>
    </location>
</feature>
<geneLocation type="mitochondrion"/>
<reference key="1">
    <citation type="journal article" date="2004" name="Mol. Phylogenet. Evol.">
        <title>A phylogeny of the extant Phocidae inferred from complete mitochondrial DNA coding regions.</title>
        <authorList>
            <person name="Davis C.S."/>
            <person name="Delisle I."/>
            <person name="Stirling I."/>
            <person name="Siniff D.B."/>
            <person name="Strobeck C."/>
        </authorList>
    </citation>
    <scope>NUCLEOTIDE SEQUENCE [GENOMIC DNA]</scope>
</reference>
<reference key="2">
    <citation type="journal article" date="2006" name="Mol. Phylogenet. Evol.">
        <title>Pinniped phylogeny and a new hypothesis for their origin and dispersal.</title>
        <authorList>
            <person name="Arnason U."/>
            <person name="Gullberg A."/>
            <person name="Janke A."/>
            <person name="Kullberg M."/>
            <person name="Lehman N."/>
            <person name="Petrov E.A."/>
            <person name="Vainola R."/>
        </authorList>
    </citation>
    <scope>NUCLEOTIDE SEQUENCE [GENOMIC DNA]</scope>
</reference>
<protein>
    <recommendedName>
        <fullName>NADH-ubiquinone oxidoreductase chain 4L</fullName>
        <ecNumber>7.1.1.2</ecNumber>
    </recommendedName>
    <alternativeName>
        <fullName>NADH dehydrogenase subunit 4L</fullName>
    </alternativeName>
</protein>
<evidence type="ECO:0000250" key="1">
    <source>
        <dbReference type="UniProtKB" id="P03901"/>
    </source>
</evidence>
<evidence type="ECO:0000250" key="2">
    <source>
        <dbReference type="UniProtKB" id="P03902"/>
    </source>
</evidence>
<evidence type="ECO:0000255" key="3"/>
<evidence type="ECO:0000305" key="4"/>
<accession>Q679C1</accession>
<proteinExistence type="inferred from homology"/>
<comment type="function">
    <text evidence="1">Core subunit of the mitochondrial membrane respiratory chain NADH dehydrogenase (Complex I) which catalyzes electron transfer from NADH through the respiratory chain, using ubiquinone as an electron acceptor. Part of the enzyme membrane arm which is embedded in the lipid bilayer and involved in proton translocation.</text>
</comment>
<comment type="catalytic activity">
    <reaction evidence="1">
        <text>a ubiquinone + NADH + 5 H(+)(in) = a ubiquinol + NAD(+) + 4 H(+)(out)</text>
        <dbReference type="Rhea" id="RHEA:29091"/>
        <dbReference type="Rhea" id="RHEA-COMP:9565"/>
        <dbReference type="Rhea" id="RHEA-COMP:9566"/>
        <dbReference type="ChEBI" id="CHEBI:15378"/>
        <dbReference type="ChEBI" id="CHEBI:16389"/>
        <dbReference type="ChEBI" id="CHEBI:17976"/>
        <dbReference type="ChEBI" id="CHEBI:57540"/>
        <dbReference type="ChEBI" id="CHEBI:57945"/>
        <dbReference type="EC" id="7.1.1.2"/>
    </reaction>
    <physiologicalReaction direction="left-to-right" evidence="1">
        <dbReference type="Rhea" id="RHEA:29092"/>
    </physiologicalReaction>
</comment>
<comment type="subunit">
    <text evidence="2">Core subunit of respiratory chain NADH dehydrogenase (Complex I) which is composed of 45 different subunits.</text>
</comment>
<comment type="subcellular location">
    <subcellularLocation>
        <location evidence="2">Mitochondrion inner membrane</location>
        <topology evidence="3">Multi-pass membrane protein</topology>
    </subcellularLocation>
</comment>
<comment type="similarity">
    <text evidence="4">Belongs to the complex I subunit 4L family.</text>
</comment>
<keyword id="KW-0249">Electron transport</keyword>
<keyword id="KW-0472">Membrane</keyword>
<keyword id="KW-0496">Mitochondrion</keyword>
<keyword id="KW-0999">Mitochondrion inner membrane</keyword>
<keyword id="KW-0520">NAD</keyword>
<keyword id="KW-0679">Respiratory chain</keyword>
<keyword id="KW-1278">Translocase</keyword>
<keyword id="KW-0812">Transmembrane</keyword>
<keyword id="KW-1133">Transmembrane helix</keyword>
<keyword id="KW-0813">Transport</keyword>
<keyword id="KW-0830">Ubiquinone</keyword>
<organism>
    <name type="scientific">Lobodon carcinophaga</name>
    <name type="common">Crabeater seal</name>
    <name type="synonym">Phoca carcinophaga</name>
    <dbReference type="NCBI Taxonomy" id="101849"/>
    <lineage>
        <taxon>Eukaryota</taxon>
        <taxon>Metazoa</taxon>
        <taxon>Chordata</taxon>
        <taxon>Craniata</taxon>
        <taxon>Vertebrata</taxon>
        <taxon>Euteleostomi</taxon>
        <taxon>Mammalia</taxon>
        <taxon>Eutheria</taxon>
        <taxon>Laurasiatheria</taxon>
        <taxon>Carnivora</taxon>
        <taxon>Caniformia</taxon>
        <taxon>Pinnipedia</taxon>
        <taxon>Phocidae</taxon>
        <taxon>Monachinae</taxon>
        <taxon>Lobodontini</taxon>
        <taxon>Lobodon</taxon>
    </lineage>
</organism>
<gene>
    <name type="primary">MT-ND4L</name>
    <name type="synonym">MTND4L</name>
    <name type="synonym">NADH4L</name>
    <name type="synonym">ND4L</name>
</gene>
<sequence>MTMVYANIFLAFITSLMGLLMYRSHLMSSLLCLEGMMLSLFVMMTVTILNNHFTLASMTPIILLVFAACEAALGLSLLVMVSNTYGTDYVQNLNLLQC</sequence>